<gene>
    <name evidence="3" type="primary">Ciao2b</name>
    <name type="synonym">Fam96b</name>
    <name type="synonym">Mip18</name>
</gene>
<protein>
    <recommendedName>
        <fullName evidence="2">Cytosolic iron-sulfur assembly component 2B</fullName>
    </recommendedName>
    <alternativeName>
        <fullName evidence="2">Mitotic spindle-associated MMXD complex subunit MIP18</fullName>
    </alternativeName>
</protein>
<sequence>MVGGGGSGGGLLENANPLIYERSGERPVTAGEEDEEVPDSIDAREIFDLIRSINDPEHPLTLEELNVVEQVRIQVSDPESTVAVAFTPTIPHCSMATLIGLSIKVKLLRSLPQRFKMDVHITPGTHASEHAVNKQLADKERVAAALENTHLLEVVNQCLSARS</sequence>
<keyword id="KW-0159">Chromosome partition</keyword>
<keyword id="KW-0963">Cytoplasm</keyword>
<keyword id="KW-0206">Cytoskeleton</keyword>
<keyword id="KW-0539">Nucleus</keyword>
<keyword id="KW-1185">Reference proteome</keyword>
<comment type="function">
    <text evidence="1">Component of the cytosolic iron-sulfur protein assembly (CIA) complex, a multiprotein complex that mediates the incorporation of iron-sulfur cluster into extramitochondrial Fe/S proteins. As a CIA complex component and in collaboration with CIAO1 and MMS19, binds to and facilitates the assembly of most cytosolic-nuclear Fe/S proteins. As part of the mitotic spindle-associated MMXD complex it plays a role in chromosome segregation, probably by facilitating iron-sulfur cluster assembly into ERCC2/XPD. Together with MMS19, facilitates the transfer of Fe-S clusters to the motor protein KIF4A, which ensures proper localization of KIF4A to mitotic machinery components to promote the progression of mitosis.</text>
</comment>
<comment type="subunit">
    <text evidence="1">Component of the CIA complex. Component of the MMXD complex, which includes CIAO1, ERCC2, CIAO2B, MMS19 and SLC25A5. Interacts with CIAO1, ERCC2 and MMS19; the interactions are direct. Interacts with KIF4A; the interaction facilitates the transfer of Fe-S clusters to KIF4A to ensure proper localization of KIF4A to the mitotic machinery. Interacts with CCDC117; the interaction is direct (By similarity).</text>
</comment>
<comment type="subcellular location">
    <subcellularLocation>
        <location evidence="1">Nucleus</location>
    </subcellularLocation>
    <subcellularLocation>
        <location evidence="1">Cytoplasm</location>
        <location evidence="1">Cytoskeleton</location>
        <location evidence="1">Spindle</location>
    </subcellularLocation>
</comment>
<comment type="similarity">
    <text evidence="2">Belongs to the MIP18 family.</text>
</comment>
<evidence type="ECO:0000250" key="1">
    <source>
        <dbReference type="UniProtKB" id="Q9Y3D0"/>
    </source>
</evidence>
<evidence type="ECO:0000305" key="2"/>
<evidence type="ECO:0000312" key="3">
    <source>
        <dbReference type="MGI" id="MGI:1915773"/>
    </source>
</evidence>
<feature type="chain" id="PRO_0000212692" description="Cytosolic iron-sulfur assembly component 2B">
    <location>
        <begin position="1"/>
        <end position="163"/>
    </location>
</feature>
<organism>
    <name type="scientific">Mus musculus</name>
    <name type="common">Mouse</name>
    <dbReference type="NCBI Taxonomy" id="10090"/>
    <lineage>
        <taxon>Eukaryota</taxon>
        <taxon>Metazoa</taxon>
        <taxon>Chordata</taxon>
        <taxon>Craniata</taxon>
        <taxon>Vertebrata</taxon>
        <taxon>Euteleostomi</taxon>
        <taxon>Mammalia</taxon>
        <taxon>Eutheria</taxon>
        <taxon>Euarchontoglires</taxon>
        <taxon>Glires</taxon>
        <taxon>Rodentia</taxon>
        <taxon>Myomorpha</taxon>
        <taxon>Muroidea</taxon>
        <taxon>Muridae</taxon>
        <taxon>Murinae</taxon>
        <taxon>Mus</taxon>
        <taxon>Mus</taxon>
    </lineage>
</organism>
<accession>Q9D187</accession>
<reference key="1">
    <citation type="journal article" date="2005" name="Science">
        <title>The transcriptional landscape of the mammalian genome.</title>
        <authorList>
            <person name="Carninci P."/>
            <person name="Kasukawa T."/>
            <person name="Katayama S."/>
            <person name="Gough J."/>
            <person name="Frith M.C."/>
            <person name="Maeda N."/>
            <person name="Oyama R."/>
            <person name="Ravasi T."/>
            <person name="Lenhard B."/>
            <person name="Wells C."/>
            <person name="Kodzius R."/>
            <person name="Shimokawa K."/>
            <person name="Bajic V.B."/>
            <person name="Brenner S.E."/>
            <person name="Batalov S."/>
            <person name="Forrest A.R."/>
            <person name="Zavolan M."/>
            <person name="Davis M.J."/>
            <person name="Wilming L.G."/>
            <person name="Aidinis V."/>
            <person name="Allen J.E."/>
            <person name="Ambesi-Impiombato A."/>
            <person name="Apweiler R."/>
            <person name="Aturaliya R.N."/>
            <person name="Bailey T.L."/>
            <person name="Bansal M."/>
            <person name="Baxter L."/>
            <person name="Beisel K.W."/>
            <person name="Bersano T."/>
            <person name="Bono H."/>
            <person name="Chalk A.M."/>
            <person name="Chiu K.P."/>
            <person name="Choudhary V."/>
            <person name="Christoffels A."/>
            <person name="Clutterbuck D.R."/>
            <person name="Crowe M.L."/>
            <person name="Dalla E."/>
            <person name="Dalrymple B.P."/>
            <person name="de Bono B."/>
            <person name="Della Gatta G."/>
            <person name="di Bernardo D."/>
            <person name="Down T."/>
            <person name="Engstrom P."/>
            <person name="Fagiolini M."/>
            <person name="Faulkner G."/>
            <person name="Fletcher C.F."/>
            <person name="Fukushima T."/>
            <person name="Furuno M."/>
            <person name="Futaki S."/>
            <person name="Gariboldi M."/>
            <person name="Georgii-Hemming P."/>
            <person name="Gingeras T.R."/>
            <person name="Gojobori T."/>
            <person name="Green R.E."/>
            <person name="Gustincich S."/>
            <person name="Harbers M."/>
            <person name="Hayashi Y."/>
            <person name="Hensch T.K."/>
            <person name="Hirokawa N."/>
            <person name="Hill D."/>
            <person name="Huminiecki L."/>
            <person name="Iacono M."/>
            <person name="Ikeo K."/>
            <person name="Iwama A."/>
            <person name="Ishikawa T."/>
            <person name="Jakt M."/>
            <person name="Kanapin A."/>
            <person name="Katoh M."/>
            <person name="Kawasawa Y."/>
            <person name="Kelso J."/>
            <person name="Kitamura H."/>
            <person name="Kitano H."/>
            <person name="Kollias G."/>
            <person name="Krishnan S.P."/>
            <person name="Kruger A."/>
            <person name="Kummerfeld S.K."/>
            <person name="Kurochkin I.V."/>
            <person name="Lareau L.F."/>
            <person name="Lazarevic D."/>
            <person name="Lipovich L."/>
            <person name="Liu J."/>
            <person name="Liuni S."/>
            <person name="McWilliam S."/>
            <person name="Madan Babu M."/>
            <person name="Madera M."/>
            <person name="Marchionni L."/>
            <person name="Matsuda H."/>
            <person name="Matsuzawa S."/>
            <person name="Miki H."/>
            <person name="Mignone F."/>
            <person name="Miyake S."/>
            <person name="Morris K."/>
            <person name="Mottagui-Tabar S."/>
            <person name="Mulder N."/>
            <person name="Nakano N."/>
            <person name="Nakauchi H."/>
            <person name="Ng P."/>
            <person name="Nilsson R."/>
            <person name="Nishiguchi S."/>
            <person name="Nishikawa S."/>
            <person name="Nori F."/>
            <person name="Ohara O."/>
            <person name="Okazaki Y."/>
            <person name="Orlando V."/>
            <person name="Pang K.C."/>
            <person name="Pavan W.J."/>
            <person name="Pavesi G."/>
            <person name="Pesole G."/>
            <person name="Petrovsky N."/>
            <person name="Piazza S."/>
            <person name="Reed J."/>
            <person name="Reid J.F."/>
            <person name="Ring B.Z."/>
            <person name="Ringwald M."/>
            <person name="Rost B."/>
            <person name="Ruan Y."/>
            <person name="Salzberg S.L."/>
            <person name="Sandelin A."/>
            <person name="Schneider C."/>
            <person name="Schoenbach C."/>
            <person name="Sekiguchi K."/>
            <person name="Semple C.A."/>
            <person name="Seno S."/>
            <person name="Sessa L."/>
            <person name="Sheng Y."/>
            <person name="Shibata Y."/>
            <person name="Shimada H."/>
            <person name="Shimada K."/>
            <person name="Silva D."/>
            <person name="Sinclair B."/>
            <person name="Sperling S."/>
            <person name="Stupka E."/>
            <person name="Sugiura K."/>
            <person name="Sultana R."/>
            <person name="Takenaka Y."/>
            <person name="Taki K."/>
            <person name="Tammoja K."/>
            <person name="Tan S.L."/>
            <person name="Tang S."/>
            <person name="Taylor M.S."/>
            <person name="Tegner J."/>
            <person name="Teichmann S.A."/>
            <person name="Ueda H.R."/>
            <person name="van Nimwegen E."/>
            <person name="Verardo R."/>
            <person name="Wei C.L."/>
            <person name="Yagi K."/>
            <person name="Yamanishi H."/>
            <person name="Zabarovsky E."/>
            <person name="Zhu S."/>
            <person name="Zimmer A."/>
            <person name="Hide W."/>
            <person name="Bult C."/>
            <person name="Grimmond S.M."/>
            <person name="Teasdale R.D."/>
            <person name="Liu E.T."/>
            <person name="Brusic V."/>
            <person name="Quackenbush J."/>
            <person name="Wahlestedt C."/>
            <person name="Mattick J.S."/>
            <person name="Hume D.A."/>
            <person name="Kai C."/>
            <person name="Sasaki D."/>
            <person name="Tomaru Y."/>
            <person name="Fukuda S."/>
            <person name="Kanamori-Katayama M."/>
            <person name="Suzuki M."/>
            <person name="Aoki J."/>
            <person name="Arakawa T."/>
            <person name="Iida J."/>
            <person name="Imamura K."/>
            <person name="Itoh M."/>
            <person name="Kato T."/>
            <person name="Kawaji H."/>
            <person name="Kawagashira N."/>
            <person name="Kawashima T."/>
            <person name="Kojima M."/>
            <person name="Kondo S."/>
            <person name="Konno H."/>
            <person name="Nakano K."/>
            <person name="Ninomiya N."/>
            <person name="Nishio T."/>
            <person name="Okada M."/>
            <person name="Plessy C."/>
            <person name="Shibata K."/>
            <person name="Shiraki T."/>
            <person name="Suzuki S."/>
            <person name="Tagami M."/>
            <person name="Waki K."/>
            <person name="Watahiki A."/>
            <person name="Okamura-Oho Y."/>
            <person name="Suzuki H."/>
            <person name="Kawai J."/>
            <person name="Hayashizaki Y."/>
        </authorList>
    </citation>
    <scope>NUCLEOTIDE SEQUENCE [LARGE SCALE MRNA]</scope>
    <source>
        <strain>C57BL/6J</strain>
        <tissue>Embryo</tissue>
    </source>
</reference>
<reference key="2">
    <citation type="journal article" date="2004" name="Genome Res.">
        <title>The status, quality, and expansion of the NIH full-length cDNA project: the Mammalian Gene Collection (MGC).</title>
        <authorList>
            <consortium name="The MGC Project Team"/>
        </authorList>
    </citation>
    <scope>NUCLEOTIDE SEQUENCE [LARGE SCALE MRNA]</scope>
    <source>
        <strain>FVB/N</strain>
        <tissue>Salivary gland</tissue>
    </source>
</reference>
<reference key="3">
    <citation type="journal article" date="2010" name="Cell">
        <title>A tissue-specific atlas of mouse protein phosphorylation and expression.</title>
        <authorList>
            <person name="Huttlin E.L."/>
            <person name="Jedrychowski M.P."/>
            <person name="Elias J.E."/>
            <person name="Goswami T."/>
            <person name="Rad R."/>
            <person name="Beausoleil S.A."/>
            <person name="Villen J."/>
            <person name="Haas W."/>
            <person name="Sowa M.E."/>
            <person name="Gygi S.P."/>
        </authorList>
    </citation>
    <scope>IDENTIFICATION BY MASS SPECTROMETRY [LARGE SCALE ANALYSIS]</scope>
    <source>
        <tissue>Brain</tissue>
        <tissue>Brown adipose tissue</tissue>
        <tissue>Heart</tissue>
        <tissue>Kidney</tissue>
        <tissue>Liver</tissue>
        <tissue>Lung</tissue>
        <tissue>Spleen</tissue>
        <tissue>Testis</tissue>
    </source>
</reference>
<proteinExistence type="evidence at protein level"/>
<name>CIA2B_MOUSE</name>
<dbReference type="EMBL" id="AK003830">
    <property type="protein sequence ID" value="BAB23024.1"/>
    <property type="molecule type" value="mRNA"/>
</dbReference>
<dbReference type="EMBL" id="BC055880">
    <property type="protein sequence ID" value="AAH55880.1"/>
    <property type="molecule type" value="mRNA"/>
</dbReference>
<dbReference type="CCDS" id="CCDS52649.1"/>
<dbReference type="RefSeq" id="NP_081029.1">
    <property type="nucleotide sequence ID" value="NM_026753.2"/>
</dbReference>
<dbReference type="SMR" id="Q9D187"/>
<dbReference type="BioGRID" id="212906">
    <property type="interactions" value="6"/>
</dbReference>
<dbReference type="FunCoup" id="Q9D187">
    <property type="interactions" value="2462"/>
</dbReference>
<dbReference type="IntAct" id="Q9D187">
    <property type="interactions" value="2"/>
</dbReference>
<dbReference type="MINT" id="Q9D187"/>
<dbReference type="STRING" id="10090.ENSMUSP00000132725"/>
<dbReference type="PhosphoSitePlus" id="Q9D187"/>
<dbReference type="SwissPalm" id="Q9D187"/>
<dbReference type="REPRODUCTION-2DPAGE" id="Q9D187"/>
<dbReference type="PaxDb" id="10090-ENSMUSP00000132725"/>
<dbReference type="PeptideAtlas" id="Q9D187"/>
<dbReference type="ProteomicsDB" id="290252"/>
<dbReference type="Pumba" id="Q9D187"/>
<dbReference type="Antibodypedia" id="44224">
    <property type="antibodies" value="180 antibodies from 30 providers"/>
</dbReference>
<dbReference type="DNASU" id="68523"/>
<dbReference type="Ensembl" id="ENSMUST00000164884.9">
    <property type="protein sequence ID" value="ENSMUSP00000132725.2"/>
    <property type="gene ID" value="ENSMUSG00000031879.15"/>
</dbReference>
<dbReference type="GeneID" id="68523"/>
<dbReference type="KEGG" id="mmu:68523"/>
<dbReference type="UCSC" id="uc033jhf.1">
    <property type="organism name" value="mouse"/>
</dbReference>
<dbReference type="AGR" id="MGI:1915773"/>
<dbReference type="CTD" id="51647"/>
<dbReference type="MGI" id="MGI:1915773">
    <property type="gene designation" value="Ciao2b"/>
</dbReference>
<dbReference type="VEuPathDB" id="HostDB:ENSMUSG00000031879"/>
<dbReference type="eggNOG" id="KOG3381">
    <property type="taxonomic scope" value="Eukaryota"/>
</dbReference>
<dbReference type="GeneTree" id="ENSGT00390000017697"/>
<dbReference type="HOGENOM" id="CLU_075876_3_1_1"/>
<dbReference type="InParanoid" id="Q9D187"/>
<dbReference type="OMA" id="NQCISAR"/>
<dbReference type="OrthoDB" id="2746at2759"/>
<dbReference type="PhylomeDB" id="Q9D187"/>
<dbReference type="TreeFam" id="TF105940"/>
<dbReference type="BioGRID-ORCS" id="68523">
    <property type="hits" value="28 hits in 71 CRISPR screens"/>
</dbReference>
<dbReference type="ChiTaRS" id="Ciao2b">
    <property type="organism name" value="mouse"/>
</dbReference>
<dbReference type="PRO" id="PR:Q9D187"/>
<dbReference type="Proteomes" id="UP000000589">
    <property type="component" value="Chromosome 8"/>
</dbReference>
<dbReference type="RNAct" id="Q9D187">
    <property type="molecule type" value="protein"/>
</dbReference>
<dbReference type="Bgee" id="ENSMUSG00000031879">
    <property type="expression patterns" value="Expressed in embryonic brain and 267 other cell types or tissues"/>
</dbReference>
<dbReference type="ExpressionAtlas" id="Q9D187">
    <property type="expression patterns" value="baseline and differential"/>
</dbReference>
<dbReference type="GO" id="GO:0005737">
    <property type="term" value="C:cytoplasm"/>
    <property type="evidence" value="ECO:0000250"/>
    <property type="project" value="UniProtKB"/>
</dbReference>
<dbReference type="GO" id="GO:0097361">
    <property type="term" value="C:cytosolic [4Fe-4S] assembly targeting complex"/>
    <property type="evidence" value="ECO:0000250"/>
    <property type="project" value="UniProtKB"/>
</dbReference>
<dbReference type="GO" id="GO:0071817">
    <property type="term" value="C:MMXD complex"/>
    <property type="evidence" value="ECO:0000250"/>
    <property type="project" value="UniProtKB"/>
</dbReference>
<dbReference type="GO" id="GO:0005654">
    <property type="term" value="C:nucleoplasm"/>
    <property type="evidence" value="ECO:0007669"/>
    <property type="project" value="Ensembl"/>
</dbReference>
<dbReference type="GO" id="GO:0005634">
    <property type="term" value="C:nucleus"/>
    <property type="evidence" value="ECO:0000250"/>
    <property type="project" value="UniProtKB"/>
</dbReference>
<dbReference type="GO" id="GO:0005819">
    <property type="term" value="C:spindle"/>
    <property type="evidence" value="ECO:0000250"/>
    <property type="project" value="UniProtKB"/>
</dbReference>
<dbReference type="GO" id="GO:0007059">
    <property type="term" value="P:chromosome segregation"/>
    <property type="evidence" value="ECO:0000250"/>
    <property type="project" value="UniProtKB"/>
</dbReference>
<dbReference type="GO" id="GO:0051604">
    <property type="term" value="P:protein maturation"/>
    <property type="evidence" value="ECO:0000250"/>
    <property type="project" value="UniProtKB"/>
</dbReference>
<dbReference type="FunFam" id="3.30.300.130:FF:000005">
    <property type="entry name" value="Mitotic spindle-associated mmxd complex subunit"/>
    <property type="match status" value="1"/>
</dbReference>
<dbReference type="Gene3D" id="6.10.250.1280">
    <property type="match status" value="1"/>
</dbReference>
<dbReference type="Gene3D" id="3.30.300.130">
    <property type="entry name" value="Fe-S cluster assembly (FSCA)"/>
    <property type="match status" value="1"/>
</dbReference>
<dbReference type="InterPro" id="IPR034904">
    <property type="entry name" value="FSCA_dom_sf"/>
</dbReference>
<dbReference type="InterPro" id="IPR039796">
    <property type="entry name" value="MIP18"/>
</dbReference>
<dbReference type="InterPro" id="IPR002744">
    <property type="entry name" value="MIP18-like"/>
</dbReference>
<dbReference type="PANTHER" id="PTHR12377:SF0">
    <property type="entry name" value="CYTOSOLIC IRON-SULFUR ASSEMBLY COMPONENT 2B"/>
    <property type="match status" value="1"/>
</dbReference>
<dbReference type="PANTHER" id="PTHR12377">
    <property type="entry name" value="CYTOSOLIC IRON-SULFUR ASSEMBLY COMPONENT 2B-RELATED"/>
    <property type="match status" value="1"/>
</dbReference>
<dbReference type="Pfam" id="PF01883">
    <property type="entry name" value="FeS_assembly_P"/>
    <property type="match status" value="1"/>
</dbReference>
<dbReference type="SUPFAM" id="SSF117916">
    <property type="entry name" value="Fe-S cluster assembly (FSCA) domain-like"/>
    <property type="match status" value="1"/>
</dbReference>